<sequence>MRQLQKQIIEDLKVIPTIDPQVEVRRRIDFLKDYLKQTKMATLVLGISGGQDSALAGRLAQLAVEELRKESGSEDYQFIAVRLPYGEQADESDAMMAIDDFIHPDRVVKVNIKPATDAMVMTLEAAGTKISDFNKGNIKARERMIVQYAIAGEYHGAVVGTDHAAEAVTGFYTKYGDGGADVTPLSQLDKRQGRALLEYLGAPEKLYQKTPTADLEEDRPALPDEQALGVTYKDIDDFLEGREVDQAAAEKIEAWYQRTGHKRHMPVAPLDTWWKD</sequence>
<reference key="1">
    <citation type="journal article" date="2008" name="DNA Res.">
        <title>Comparative genome analysis of Lactobacillus reuteri and Lactobacillus fermentum reveal a genomic island for reuterin and cobalamin production.</title>
        <authorList>
            <person name="Morita H."/>
            <person name="Toh H."/>
            <person name="Fukuda S."/>
            <person name="Horikawa H."/>
            <person name="Oshima K."/>
            <person name="Suzuki T."/>
            <person name="Murakami M."/>
            <person name="Hisamatsu S."/>
            <person name="Kato Y."/>
            <person name="Takizawa T."/>
            <person name="Fukuoka H."/>
            <person name="Yoshimura T."/>
            <person name="Itoh K."/>
            <person name="O'Sullivan D.J."/>
            <person name="McKay L.L."/>
            <person name="Ohno H."/>
            <person name="Kikuchi J."/>
            <person name="Masaoka T."/>
            <person name="Hattori M."/>
        </authorList>
    </citation>
    <scope>NUCLEOTIDE SEQUENCE [LARGE SCALE GENOMIC DNA]</scope>
    <source>
        <strain>NBRC 3956 / LMG 18251</strain>
    </source>
</reference>
<dbReference type="EC" id="6.3.1.5" evidence="1"/>
<dbReference type="EMBL" id="AP008937">
    <property type="protein sequence ID" value="BAG26580.1"/>
    <property type="molecule type" value="Genomic_DNA"/>
</dbReference>
<dbReference type="RefSeq" id="WP_012390823.1">
    <property type="nucleotide sequence ID" value="NC_010610.1"/>
</dbReference>
<dbReference type="SMR" id="B2GA98"/>
<dbReference type="KEGG" id="lfe:LAF_0244"/>
<dbReference type="PATRIC" id="fig|334390.5.peg.275"/>
<dbReference type="eggNOG" id="COG0171">
    <property type="taxonomic scope" value="Bacteria"/>
</dbReference>
<dbReference type="HOGENOM" id="CLU_059327_3_0_9"/>
<dbReference type="UniPathway" id="UPA00253">
    <property type="reaction ID" value="UER00333"/>
</dbReference>
<dbReference type="Proteomes" id="UP000001697">
    <property type="component" value="Chromosome"/>
</dbReference>
<dbReference type="GO" id="GO:0005737">
    <property type="term" value="C:cytoplasm"/>
    <property type="evidence" value="ECO:0007669"/>
    <property type="project" value="InterPro"/>
</dbReference>
<dbReference type="GO" id="GO:0005524">
    <property type="term" value="F:ATP binding"/>
    <property type="evidence" value="ECO:0007669"/>
    <property type="project" value="UniProtKB-UniRule"/>
</dbReference>
<dbReference type="GO" id="GO:0004359">
    <property type="term" value="F:glutaminase activity"/>
    <property type="evidence" value="ECO:0007669"/>
    <property type="project" value="InterPro"/>
</dbReference>
<dbReference type="GO" id="GO:0046872">
    <property type="term" value="F:metal ion binding"/>
    <property type="evidence" value="ECO:0007669"/>
    <property type="project" value="UniProtKB-KW"/>
</dbReference>
<dbReference type="GO" id="GO:0003952">
    <property type="term" value="F:NAD+ synthase (glutamine-hydrolyzing) activity"/>
    <property type="evidence" value="ECO:0007669"/>
    <property type="project" value="InterPro"/>
</dbReference>
<dbReference type="GO" id="GO:0008795">
    <property type="term" value="F:NAD+ synthase activity"/>
    <property type="evidence" value="ECO:0007669"/>
    <property type="project" value="UniProtKB-UniRule"/>
</dbReference>
<dbReference type="GO" id="GO:0009435">
    <property type="term" value="P:NAD biosynthetic process"/>
    <property type="evidence" value="ECO:0007669"/>
    <property type="project" value="UniProtKB-UniRule"/>
</dbReference>
<dbReference type="CDD" id="cd00553">
    <property type="entry name" value="NAD_synthase"/>
    <property type="match status" value="1"/>
</dbReference>
<dbReference type="FunFam" id="3.40.50.620:FF:000015">
    <property type="entry name" value="NH(3)-dependent NAD(+) synthetase"/>
    <property type="match status" value="1"/>
</dbReference>
<dbReference type="Gene3D" id="3.40.50.620">
    <property type="entry name" value="HUPs"/>
    <property type="match status" value="1"/>
</dbReference>
<dbReference type="HAMAP" id="MF_00193">
    <property type="entry name" value="NadE_ammonia_dep"/>
    <property type="match status" value="1"/>
</dbReference>
<dbReference type="InterPro" id="IPR022310">
    <property type="entry name" value="NAD/GMP_synthase"/>
</dbReference>
<dbReference type="InterPro" id="IPR003694">
    <property type="entry name" value="NAD_synthase"/>
</dbReference>
<dbReference type="InterPro" id="IPR022926">
    <property type="entry name" value="NH(3)-dep_NAD(+)_synth"/>
</dbReference>
<dbReference type="InterPro" id="IPR014729">
    <property type="entry name" value="Rossmann-like_a/b/a_fold"/>
</dbReference>
<dbReference type="NCBIfam" id="TIGR00552">
    <property type="entry name" value="nadE"/>
    <property type="match status" value="1"/>
</dbReference>
<dbReference type="NCBIfam" id="NF001979">
    <property type="entry name" value="PRK00768.1"/>
    <property type="match status" value="1"/>
</dbReference>
<dbReference type="PANTHER" id="PTHR23090">
    <property type="entry name" value="NH 3 /GLUTAMINE-DEPENDENT NAD + SYNTHETASE"/>
    <property type="match status" value="1"/>
</dbReference>
<dbReference type="PANTHER" id="PTHR23090:SF7">
    <property type="entry name" value="NH(3)-DEPENDENT NAD(+) SYNTHETASE"/>
    <property type="match status" value="1"/>
</dbReference>
<dbReference type="Pfam" id="PF02540">
    <property type="entry name" value="NAD_synthase"/>
    <property type="match status" value="1"/>
</dbReference>
<dbReference type="SUPFAM" id="SSF52402">
    <property type="entry name" value="Adenine nucleotide alpha hydrolases-like"/>
    <property type="match status" value="1"/>
</dbReference>
<name>NADE_LIMF3</name>
<organism>
    <name type="scientific">Limosilactobacillus fermentum (strain NBRC 3956 / LMG 18251)</name>
    <name type="common">Lactobacillus fermentum</name>
    <dbReference type="NCBI Taxonomy" id="334390"/>
    <lineage>
        <taxon>Bacteria</taxon>
        <taxon>Bacillati</taxon>
        <taxon>Bacillota</taxon>
        <taxon>Bacilli</taxon>
        <taxon>Lactobacillales</taxon>
        <taxon>Lactobacillaceae</taxon>
        <taxon>Limosilactobacillus</taxon>
    </lineage>
</organism>
<keyword id="KW-0067">ATP-binding</keyword>
<keyword id="KW-0436">Ligase</keyword>
<keyword id="KW-0460">Magnesium</keyword>
<keyword id="KW-0479">Metal-binding</keyword>
<keyword id="KW-0520">NAD</keyword>
<keyword id="KW-0547">Nucleotide-binding</keyword>
<keyword id="KW-1185">Reference proteome</keyword>
<evidence type="ECO:0000255" key="1">
    <source>
        <dbReference type="HAMAP-Rule" id="MF_00193"/>
    </source>
</evidence>
<protein>
    <recommendedName>
        <fullName evidence="1">NH(3)-dependent NAD(+) synthetase</fullName>
        <ecNumber evidence="1">6.3.1.5</ecNumber>
    </recommendedName>
</protein>
<gene>
    <name evidence="1" type="primary">nadE</name>
    <name type="ordered locus">LAF_0244</name>
</gene>
<accession>B2GA98</accession>
<proteinExistence type="inferred from homology"/>
<feature type="chain" id="PRO_1000099029" description="NH(3)-dependent NAD(+) synthetase">
    <location>
        <begin position="1"/>
        <end position="276"/>
    </location>
</feature>
<feature type="binding site" evidence="1">
    <location>
        <begin position="46"/>
        <end position="53"/>
    </location>
    <ligand>
        <name>ATP</name>
        <dbReference type="ChEBI" id="CHEBI:30616"/>
    </ligand>
</feature>
<feature type="binding site" evidence="1">
    <location>
        <position position="52"/>
    </location>
    <ligand>
        <name>Mg(2+)</name>
        <dbReference type="ChEBI" id="CHEBI:18420"/>
    </ligand>
</feature>
<feature type="binding site" evidence="1">
    <location>
        <position position="141"/>
    </location>
    <ligand>
        <name>deamido-NAD(+)</name>
        <dbReference type="ChEBI" id="CHEBI:58437"/>
    </ligand>
</feature>
<feature type="binding site" evidence="1">
    <location>
        <position position="161"/>
    </location>
    <ligand>
        <name>ATP</name>
        <dbReference type="ChEBI" id="CHEBI:30616"/>
    </ligand>
</feature>
<feature type="binding site" evidence="1">
    <location>
        <position position="166"/>
    </location>
    <ligand>
        <name>Mg(2+)</name>
        <dbReference type="ChEBI" id="CHEBI:18420"/>
    </ligand>
</feature>
<feature type="binding site" evidence="1">
    <location>
        <position position="174"/>
    </location>
    <ligand>
        <name>deamido-NAD(+)</name>
        <dbReference type="ChEBI" id="CHEBI:58437"/>
    </ligand>
</feature>
<feature type="binding site" evidence="1">
    <location>
        <position position="181"/>
    </location>
    <ligand>
        <name>deamido-NAD(+)</name>
        <dbReference type="ChEBI" id="CHEBI:58437"/>
    </ligand>
</feature>
<feature type="binding site" evidence="1">
    <location>
        <position position="190"/>
    </location>
    <ligand>
        <name>ATP</name>
        <dbReference type="ChEBI" id="CHEBI:30616"/>
    </ligand>
</feature>
<feature type="binding site" evidence="1">
    <location>
        <position position="212"/>
    </location>
    <ligand>
        <name>ATP</name>
        <dbReference type="ChEBI" id="CHEBI:30616"/>
    </ligand>
</feature>
<feature type="binding site" evidence="1">
    <location>
        <begin position="261"/>
        <end position="262"/>
    </location>
    <ligand>
        <name>deamido-NAD(+)</name>
        <dbReference type="ChEBI" id="CHEBI:58437"/>
    </ligand>
</feature>
<comment type="function">
    <text evidence="1">Catalyzes the ATP-dependent amidation of deamido-NAD to form NAD. Uses ammonia as a nitrogen source.</text>
</comment>
<comment type="catalytic activity">
    <reaction evidence="1">
        <text>deamido-NAD(+) + NH4(+) + ATP = AMP + diphosphate + NAD(+) + H(+)</text>
        <dbReference type="Rhea" id="RHEA:21188"/>
        <dbReference type="ChEBI" id="CHEBI:15378"/>
        <dbReference type="ChEBI" id="CHEBI:28938"/>
        <dbReference type="ChEBI" id="CHEBI:30616"/>
        <dbReference type="ChEBI" id="CHEBI:33019"/>
        <dbReference type="ChEBI" id="CHEBI:57540"/>
        <dbReference type="ChEBI" id="CHEBI:58437"/>
        <dbReference type="ChEBI" id="CHEBI:456215"/>
        <dbReference type="EC" id="6.3.1.5"/>
    </reaction>
</comment>
<comment type="pathway">
    <text evidence="1">Cofactor biosynthesis; NAD(+) biosynthesis; NAD(+) from deamido-NAD(+) (ammonia route): step 1/1.</text>
</comment>
<comment type="subunit">
    <text evidence="1">Homodimer.</text>
</comment>
<comment type="similarity">
    <text evidence="1">Belongs to the NAD synthetase family.</text>
</comment>